<organism>
    <name type="scientific">Vibrio parahaemolyticus serotype O3:K6 (strain RIMD 2210633)</name>
    <dbReference type="NCBI Taxonomy" id="223926"/>
    <lineage>
        <taxon>Bacteria</taxon>
        <taxon>Pseudomonadati</taxon>
        <taxon>Pseudomonadota</taxon>
        <taxon>Gammaproteobacteria</taxon>
        <taxon>Vibrionales</taxon>
        <taxon>Vibrionaceae</taxon>
        <taxon>Vibrio</taxon>
    </lineage>
</organism>
<dbReference type="EC" id="2.7.8.26" evidence="1"/>
<dbReference type="EMBL" id="BA000031">
    <property type="protein sequence ID" value="BAC59568.1"/>
    <property type="molecule type" value="Genomic_DNA"/>
</dbReference>
<dbReference type="RefSeq" id="NP_797684.1">
    <property type="nucleotide sequence ID" value="NC_004603.1"/>
</dbReference>
<dbReference type="KEGG" id="vpa:VP1305"/>
<dbReference type="PATRIC" id="fig|223926.6.peg.1247"/>
<dbReference type="eggNOG" id="COG0368">
    <property type="taxonomic scope" value="Bacteria"/>
</dbReference>
<dbReference type="HOGENOM" id="CLU_057426_1_1_6"/>
<dbReference type="UniPathway" id="UPA00148">
    <property type="reaction ID" value="UER00238"/>
</dbReference>
<dbReference type="Proteomes" id="UP000002493">
    <property type="component" value="Chromosome 1"/>
</dbReference>
<dbReference type="GO" id="GO:0005886">
    <property type="term" value="C:plasma membrane"/>
    <property type="evidence" value="ECO:0007669"/>
    <property type="project" value="UniProtKB-SubCell"/>
</dbReference>
<dbReference type="GO" id="GO:0051073">
    <property type="term" value="F:adenosylcobinamide-GDP ribazoletransferase activity"/>
    <property type="evidence" value="ECO:0007669"/>
    <property type="project" value="UniProtKB-UniRule"/>
</dbReference>
<dbReference type="GO" id="GO:0008818">
    <property type="term" value="F:cobalamin 5'-phosphate synthase activity"/>
    <property type="evidence" value="ECO:0007669"/>
    <property type="project" value="UniProtKB-UniRule"/>
</dbReference>
<dbReference type="GO" id="GO:0009236">
    <property type="term" value="P:cobalamin biosynthetic process"/>
    <property type="evidence" value="ECO:0007669"/>
    <property type="project" value="UniProtKB-UniRule"/>
</dbReference>
<dbReference type="HAMAP" id="MF_00719">
    <property type="entry name" value="CobS"/>
    <property type="match status" value="1"/>
</dbReference>
<dbReference type="InterPro" id="IPR003805">
    <property type="entry name" value="CobS"/>
</dbReference>
<dbReference type="NCBIfam" id="TIGR00317">
    <property type="entry name" value="cobS"/>
    <property type="match status" value="1"/>
</dbReference>
<dbReference type="NCBIfam" id="NF001277">
    <property type="entry name" value="PRK00235.1-3"/>
    <property type="match status" value="1"/>
</dbReference>
<dbReference type="PANTHER" id="PTHR34148">
    <property type="entry name" value="ADENOSYLCOBINAMIDE-GDP RIBAZOLETRANSFERASE"/>
    <property type="match status" value="1"/>
</dbReference>
<dbReference type="PANTHER" id="PTHR34148:SF1">
    <property type="entry name" value="ADENOSYLCOBINAMIDE-GDP RIBAZOLETRANSFERASE"/>
    <property type="match status" value="1"/>
</dbReference>
<dbReference type="Pfam" id="PF02654">
    <property type="entry name" value="CobS"/>
    <property type="match status" value="1"/>
</dbReference>
<sequence length="265" mass="29207">MSESKSSRQATLRYQMELFLLAVSFFSRLPVPSDLPYSEERMNQAGRYFALVGVILGVLCALVFYFTQLIFPDSVAIVLTMAFSLLLTGAFHEDGLTDMADGIGGGMTVERRLSIMKDSRIGTYGAATLVMALLAKFVLWSELVHLPDFWLVIVVAYTTSRALAATLIYDMPYVSDSDTSKSKPLASKQSSSEVAILLFTAGVASLFLGVIQTSFIVIVLFAFRFAFKRWLTKRIGGFTGDCLGAAQQLSELLVYLTLIAFYQNI</sequence>
<proteinExistence type="inferred from homology"/>
<gene>
    <name evidence="1" type="primary">cobS</name>
    <name type="ordered locus">VP1305</name>
</gene>
<protein>
    <recommendedName>
        <fullName evidence="1">Adenosylcobinamide-GDP ribazoletransferase</fullName>
        <ecNumber evidence="1">2.7.8.26</ecNumber>
    </recommendedName>
    <alternativeName>
        <fullName evidence="1">Cobalamin synthase</fullName>
    </alternativeName>
    <alternativeName>
        <fullName evidence="1">Cobalamin-5'-phosphate synthase</fullName>
    </alternativeName>
</protein>
<name>COBS_VIBPA</name>
<evidence type="ECO:0000255" key="1">
    <source>
        <dbReference type="HAMAP-Rule" id="MF_00719"/>
    </source>
</evidence>
<keyword id="KW-0997">Cell inner membrane</keyword>
<keyword id="KW-1003">Cell membrane</keyword>
<keyword id="KW-0169">Cobalamin biosynthesis</keyword>
<keyword id="KW-0460">Magnesium</keyword>
<keyword id="KW-0472">Membrane</keyword>
<keyword id="KW-0808">Transferase</keyword>
<keyword id="KW-0812">Transmembrane</keyword>
<keyword id="KW-1133">Transmembrane helix</keyword>
<reference key="1">
    <citation type="journal article" date="2003" name="Lancet">
        <title>Genome sequence of Vibrio parahaemolyticus: a pathogenic mechanism distinct from that of V. cholerae.</title>
        <authorList>
            <person name="Makino K."/>
            <person name="Oshima K."/>
            <person name="Kurokawa K."/>
            <person name="Yokoyama K."/>
            <person name="Uda T."/>
            <person name="Tagomori K."/>
            <person name="Iijima Y."/>
            <person name="Najima M."/>
            <person name="Nakano M."/>
            <person name="Yamashita A."/>
            <person name="Kubota Y."/>
            <person name="Kimura S."/>
            <person name="Yasunaga T."/>
            <person name="Honda T."/>
            <person name="Shinagawa H."/>
            <person name="Hattori M."/>
            <person name="Iida T."/>
        </authorList>
    </citation>
    <scope>NUCLEOTIDE SEQUENCE [LARGE SCALE GENOMIC DNA]</scope>
    <source>
        <strain>RIMD 2210633</strain>
    </source>
</reference>
<comment type="function">
    <text evidence="1">Joins adenosylcobinamide-GDP and alpha-ribazole to generate adenosylcobalamin (Ado-cobalamin). Also synthesizes adenosylcobalamin 5'-phosphate from adenosylcobinamide-GDP and alpha-ribazole 5'-phosphate.</text>
</comment>
<comment type="catalytic activity">
    <reaction evidence="1">
        <text>alpha-ribazole + adenosylcob(III)inamide-GDP = adenosylcob(III)alamin + GMP + H(+)</text>
        <dbReference type="Rhea" id="RHEA:16049"/>
        <dbReference type="ChEBI" id="CHEBI:10329"/>
        <dbReference type="ChEBI" id="CHEBI:15378"/>
        <dbReference type="ChEBI" id="CHEBI:18408"/>
        <dbReference type="ChEBI" id="CHEBI:58115"/>
        <dbReference type="ChEBI" id="CHEBI:60487"/>
        <dbReference type="EC" id="2.7.8.26"/>
    </reaction>
</comment>
<comment type="catalytic activity">
    <reaction evidence="1">
        <text>alpha-ribazole 5'-phosphate + adenosylcob(III)inamide-GDP = adenosylcob(III)alamin 5'-phosphate + GMP + H(+)</text>
        <dbReference type="Rhea" id="RHEA:23560"/>
        <dbReference type="ChEBI" id="CHEBI:15378"/>
        <dbReference type="ChEBI" id="CHEBI:57918"/>
        <dbReference type="ChEBI" id="CHEBI:58115"/>
        <dbReference type="ChEBI" id="CHEBI:60487"/>
        <dbReference type="ChEBI" id="CHEBI:60493"/>
        <dbReference type="EC" id="2.7.8.26"/>
    </reaction>
</comment>
<comment type="cofactor">
    <cofactor evidence="1">
        <name>Mg(2+)</name>
        <dbReference type="ChEBI" id="CHEBI:18420"/>
    </cofactor>
</comment>
<comment type="pathway">
    <text evidence="1">Cofactor biosynthesis; adenosylcobalamin biosynthesis; adenosylcobalamin from cob(II)yrinate a,c-diamide: step 7/7.</text>
</comment>
<comment type="subcellular location">
    <subcellularLocation>
        <location evidence="1">Cell inner membrane</location>
        <topology evidence="1">Multi-pass membrane protein</topology>
    </subcellularLocation>
</comment>
<comment type="similarity">
    <text evidence="1">Belongs to the CobS family.</text>
</comment>
<accession>Q87Q45</accession>
<feature type="chain" id="PRO_0000146903" description="Adenosylcobinamide-GDP ribazoletransferase">
    <location>
        <begin position="1"/>
        <end position="265"/>
    </location>
</feature>
<feature type="transmembrane region" description="Helical" evidence="1">
    <location>
        <begin position="51"/>
        <end position="71"/>
    </location>
</feature>
<feature type="transmembrane region" description="Helical" evidence="1">
    <location>
        <begin position="72"/>
        <end position="92"/>
    </location>
</feature>
<feature type="transmembrane region" description="Helical" evidence="1">
    <location>
        <begin position="121"/>
        <end position="140"/>
    </location>
</feature>
<feature type="transmembrane region" description="Helical" evidence="1">
    <location>
        <begin position="203"/>
        <end position="223"/>
    </location>
</feature>